<sequence length="300" mass="32499">MDSESLDFSSADTVILRSPNAGTNPDGHPDTVECPDFDTDIPKTSDDSSKMDNKGSSSSSKAVKDLLELAAKSQGIVVTDVMQNTAIALHHNLGLDASSLDWFVAGITFANNSMIMEKMVSAIKELQIEVRNIQVASSGIKGTSEELVSKMKANKNDIVKELVKTRDSVLSAMGGILSAPEIEQQPVKTVTIGASQGRRKSTVVPPIEINPELESPVLSKTVSTATPEERIRHEKEKLLADLDWEIGEIAQYTPLIVDFLVPDDILAMAADGLTPELKEKIQNEIIENHIALMALEEYSS</sequence>
<organismHost>
    <name type="scientific">Embergeria</name>
    <dbReference type="NCBI Taxonomy" id="43191"/>
</organismHost>
<organismHost>
    <name type="scientific">Lactuca sativa</name>
    <name type="common">Garden lettuce</name>
    <dbReference type="NCBI Taxonomy" id="4236"/>
</organismHost>
<organismHost>
    <name type="scientific">Reichardia tingitana</name>
    <dbReference type="NCBI Taxonomy" id="43208"/>
</organismHost>
<organismHost>
    <name type="scientific">Sonchus hydrophilus</name>
    <dbReference type="NCBI Taxonomy" id="255580"/>
</organismHost>
<organismHost>
    <name type="scientific">Sonchus oleraceus</name>
    <name type="common">Common sowthistle</name>
    <dbReference type="NCBI Taxonomy" id="50207"/>
</organismHost>
<organism>
    <name type="scientific">Lettuce necrotic yellows virus (isolate 318)</name>
    <name type="common">LNYV</name>
    <dbReference type="NCBI Taxonomy" id="928304"/>
    <lineage>
        <taxon>Viruses</taxon>
        <taxon>Riboviria</taxon>
        <taxon>Orthornavirae</taxon>
        <taxon>Negarnaviricota</taxon>
        <taxon>Haploviricotina</taxon>
        <taxon>Monjiviricetes</taxon>
        <taxon>Mononegavirales</taxon>
        <taxon>Rhabdoviridae</taxon>
        <taxon>Betarhabdovirinae</taxon>
        <taxon>Cytorhabdovirus</taxon>
        <taxon>Cytorhabdovirus lactucanecante</taxon>
    </lineage>
</organism>
<accession>Q9E7N7</accession>
<gene>
    <name type="primary">P</name>
</gene>
<feature type="chain" id="PRO_0000299209" description="Phosphoprotein">
    <location>
        <begin position="1"/>
        <end position="300"/>
    </location>
</feature>
<feature type="region of interest" description="Disordered" evidence="2">
    <location>
        <begin position="1"/>
        <end position="59"/>
    </location>
</feature>
<feature type="compositionally biased region" description="Polar residues" evidence="2">
    <location>
        <begin position="1"/>
        <end position="12"/>
    </location>
</feature>
<feature type="compositionally biased region" description="Basic and acidic residues" evidence="2">
    <location>
        <begin position="40"/>
        <end position="53"/>
    </location>
</feature>
<feature type="helix" evidence="3">
    <location>
        <begin position="231"/>
        <end position="241"/>
    </location>
</feature>
<feature type="helix" evidence="3">
    <location>
        <begin position="246"/>
        <end position="249"/>
    </location>
</feature>
<feature type="helix" evidence="3">
    <location>
        <begin position="254"/>
        <end position="260"/>
    </location>
</feature>
<feature type="helix" evidence="3">
    <location>
        <begin position="263"/>
        <end position="268"/>
    </location>
</feature>
<feature type="turn" evidence="3">
    <location>
        <begin position="269"/>
        <end position="271"/>
    </location>
</feature>
<feature type="helix" evidence="3">
    <location>
        <begin position="277"/>
        <end position="300"/>
    </location>
</feature>
<keyword id="KW-0002">3D-structure</keyword>
<keyword id="KW-0143">Chaperone</keyword>
<keyword id="KW-1035">Host cytoplasm</keyword>
<keyword id="KW-0597">Phosphoprotein</keyword>
<keyword id="KW-1185">Reference proteome</keyword>
<keyword id="KW-0693">Viral RNA replication</keyword>
<keyword id="KW-0946">Virion</keyword>
<evidence type="ECO:0000250" key="1"/>
<evidence type="ECO:0000256" key="2">
    <source>
        <dbReference type="SAM" id="MobiDB-lite"/>
    </source>
</evidence>
<evidence type="ECO:0007829" key="3">
    <source>
        <dbReference type="PDB" id="3T4R"/>
    </source>
</evidence>
<proteinExistence type="evidence at protein level"/>
<dbReference type="EMBL" id="AF209035">
    <property type="protein sequence ID" value="AAG32648.1"/>
    <property type="molecule type" value="mRNA"/>
</dbReference>
<dbReference type="EMBL" id="AJ867584">
    <property type="protein sequence ID" value="CAI30422.1"/>
    <property type="molecule type" value="Genomic_RNA"/>
</dbReference>
<dbReference type="RefSeq" id="YP_425088.1">
    <property type="nucleotide sequence ID" value="NC_007642.1"/>
</dbReference>
<dbReference type="PDB" id="3T4R">
    <property type="method" value="X-ray"/>
    <property type="resolution" value="2.00 A"/>
    <property type="chains" value="A=230-300"/>
</dbReference>
<dbReference type="PDBsum" id="3T4R"/>
<dbReference type="SMR" id="Q9E7N7"/>
<dbReference type="GeneID" id="3844365"/>
<dbReference type="KEGG" id="vg:3844365"/>
<dbReference type="EvolutionaryTrace" id="Q9E7N7"/>
<dbReference type="Proteomes" id="UP000008592">
    <property type="component" value="Segment"/>
</dbReference>
<dbReference type="GO" id="GO:0030430">
    <property type="term" value="C:host cell cytoplasm"/>
    <property type="evidence" value="ECO:0007669"/>
    <property type="project" value="UniProtKB-SubCell"/>
</dbReference>
<dbReference type="GO" id="GO:0044423">
    <property type="term" value="C:virion component"/>
    <property type="evidence" value="ECO:0007669"/>
    <property type="project" value="UniProtKB-KW"/>
</dbReference>
<dbReference type="CDD" id="cd20712">
    <property type="entry name" value="LNYV_P-protein-C_like"/>
    <property type="match status" value="1"/>
</dbReference>
<dbReference type="Gene3D" id="1.20.120.1590">
    <property type="match status" value="1"/>
</dbReference>
<dbReference type="InterPro" id="IPR048486">
    <property type="entry name" value="PP_C_cytorhabdovirus"/>
</dbReference>
<dbReference type="Pfam" id="PF21658">
    <property type="entry name" value="LNYV_PP_C"/>
    <property type="match status" value="1"/>
</dbReference>
<reference key="1">
    <citation type="journal article" date="2006" name="Virus Res.">
        <title>Completion of the genome sequence of Lettuce necrotic yellows virus, type species of the genus Cytorhabdovirus.</title>
        <authorList>
            <person name="Dietzgen R.G."/>
            <person name="Callaghan B."/>
            <person name="Wetzel T."/>
            <person name="Dale J.L."/>
        </authorList>
    </citation>
    <scope>NUCLEOTIDE SEQUENCE [GENOMIC RNA / MRNA]</scope>
</reference>
<name>VP4A_LNYV3</name>
<protein>
    <recommendedName>
        <fullName>Phosphoprotein</fullName>
        <shortName>Protein P</shortName>
    </recommendedName>
    <alternativeName>
        <fullName>Protein 4a</fullName>
    </alternativeName>
</protein>
<comment type="function">
    <text evidence="1">Non catalytic polymerase cofactor and regulatory protein that plays a role in viral transcription and replication. Stabilizes the RNA polymerase L to the N-RNA template and binds the soluble protein N, preventing it from encapsidating non-genomic RNA (By similarity).</text>
</comment>
<comment type="subunit">
    <text evidence="1">Homotrimer when phosphorylated. This trimer is stabilized by binding to the L protein. Binds soluble protein N, and ribonucleocapsid (By similarity).</text>
</comment>
<comment type="subcellular location">
    <subcellularLocation>
        <location>Virion</location>
    </subcellularLocation>
    <subcellularLocation>
        <location evidence="1">Host cytoplasm</location>
    </subcellularLocation>
</comment>
<comment type="PTM">
    <text evidence="1">Phosphorylated by host kinases.</text>
</comment>